<proteinExistence type="evidence at transcript level"/>
<evidence type="ECO:0000250" key="1"/>
<evidence type="ECO:0000305" key="2"/>
<feature type="chain" id="PRO_0000305946" description="Mediator of RNA polymerase II transcription subunit 21">
    <location>
        <begin position="1"/>
        <end position="144"/>
    </location>
</feature>
<comment type="function">
    <text evidence="1">Component of the Mediator complex, a coactivator involved in the regulated transcription of nearly all RNA polymerase II-dependent genes. Mediator functions as a bridge to convey information from gene-specific regulatory proteins to the basal RNA polymerase II transcription machinery. Mediator is recruited to promoters by direct interactions with regulatory proteins and serves as a scaffold for the assembly of a functional preinitiation complex with RNA polymerase II and the general transcription factors (By similarity).</text>
</comment>
<comment type="subunit">
    <text evidence="1">Component of the Mediator complex, which is composed of MED1, MED4, MED6, MED7, MED8, MED9, MED10, MED11, MED12, MED13, MED13L, MED14, MED15, MED16, MED17, MED18, MED19, MED20, MED21, MED22, MED23, MED24, MED25, MED26, MED27, MED29, MED30, MED31, CCNC, CDK8 and CDC2L6/CDK11. The MED12, MED13, CCNC and CDK8 subunits form a distinct module termed the CDK8 module. Mediator containing the CDK8 module is less active than Mediator lacking this module in supporting transcriptional activation. Individual preparations of the Mediator complex lacking one or more distinct subunits have been variously termed ARC, CRSP, DRIP, PC2, SMCC and TRAP. Interacts with PPARG. Interacts with THRA in a ligand-dependent fashion (By similarity).</text>
</comment>
<comment type="subcellular location">
    <subcellularLocation>
        <location evidence="2">Nucleus</location>
    </subcellularLocation>
</comment>
<comment type="similarity">
    <text evidence="2">Belongs to the Mediator complex subunit 21 family.</text>
</comment>
<accession>Q4R6N3</accession>
<keyword id="KW-0010">Activator</keyword>
<keyword id="KW-0539">Nucleus</keyword>
<keyword id="KW-1185">Reference proteome</keyword>
<keyword id="KW-0804">Transcription</keyword>
<keyword id="KW-0805">Transcription regulation</keyword>
<name>MED21_MACFA</name>
<reference key="1">
    <citation type="submission" date="2005-06" db="EMBL/GenBank/DDBJ databases">
        <title>DNA sequences of macaque genes expressed in brain or testis and its evolutionary implications.</title>
        <authorList>
            <consortium name="International consortium for macaque cDNA sequencing and analysis"/>
        </authorList>
    </citation>
    <scope>NUCLEOTIDE SEQUENCE [LARGE SCALE MRNA]</scope>
    <source>
        <tissue>Testis</tissue>
    </source>
</reference>
<dbReference type="EMBL" id="AB169149">
    <property type="protein sequence ID" value="BAE01242.1"/>
    <property type="molecule type" value="mRNA"/>
</dbReference>
<dbReference type="RefSeq" id="NP_001271031.1">
    <property type="nucleotide sequence ID" value="NM_001284102.1"/>
</dbReference>
<dbReference type="RefSeq" id="XP_045220829.1">
    <property type="nucleotide sequence ID" value="XM_045364894.2"/>
</dbReference>
<dbReference type="SMR" id="Q4R6N3"/>
<dbReference type="STRING" id="9541.ENSMFAP00000028991"/>
<dbReference type="Ensembl" id="ENSMFAT00000003181.2">
    <property type="protein sequence ID" value="ENSMFAP00000028991.2"/>
    <property type="gene ID" value="ENSMFAG00000041759.2"/>
</dbReference>
<dbReference type="GeneID" id="101864839"/>
<dbReference type="VEuPathDB" id="HostDB:ENSMFAG00000041759"/>
<dbReference type="eggNOG" id="KOG1510">
    <property type="taxonomic scope" value="Eukaryota"/>
</dbReference>
<dbReference type="GeneTree" id="ENSGT00390000014557"/>
<dbReference type="OMA" id="DSFPIEA"/>
<dbReference type="Proteomes" id="UP000233100">
    <property type="component" value="Chromosome 11"/>
</dbReference>
<dbReference type="Bgee" id="ENSMFAG00000041759">
    <property type="expression patterns" value="Expressed in heart and 13 other cell types or tissues"/>
</dbReference>
<dbReference type="GO" id="GO:0016592">
    <property type="term" value="C:mediator complex"/>
    <property type="evidence" value="ECO:0007669"/>
    <property type="project" value="InterPro"/>
</dbReference>
<dbReference type="GO" id="GO:0003712">
    <property type="term" value="F:transcription coregulator activity"/>
    <property type="evidence" value="ECO:0007669"/>
    <property type="project" value="TreeGrafter"/>
</dbReference>
<dbReference type="GO" id="GO:0006357">
    <property type="term" value="P:regulation of transcription by RNA polymerase II"/>
    <property type="evidence" value="ECO:0007669"/>
    <property type="project" value="TreeGrafter"/>
</dbReference>
<dbReference type="Gene3D" id="6.10.280.10">
    <property type="entry name" value="Mediator complex, subunit Med21"/>
    <property type="match status" value="1"/>
</dbReference>
<dbReference type="InterPro" id="IPR037212">
    <property type="entry name" value="Med7/Med21-like"/>
</dbReference>
<dbReference type="InterPro" id="IPR021384">
    <property type="entry name" value="Mediator_Med21"/>
</dbReference>
<dbReference type="PANTHER" id="PTHR13381:SF0">
    <property type="entry name" value="MEDIATOR OF RNA POLYMERASE II TRANSCRIPTION SUBUNIT 21"/>
    <property type="match status" value="1"/>
</dbReference>
<dbReference type="PANTHER" id="PTHR13381">
    <property type="entry name" value="RNA POLYMERASE II HOLOENZYME COMPONENT SRB7"/>
    <property type="match status" value="1"/>
</dbReference>
<dbReference type="Pfam" id="PF11221">
    <property type="entry name" value="Med21"/>
    <property type="match status" value="1"/>
</dbReference>
<dbReference type="SUPFAM" id="SSF140718">
    <property type="entry name" value="Mediator hinge subcomplex-like"/>
    <property type="match status" value="1"/>
</dbReference>
<protein>
    <recommendedName>
        <fullName>Mediator of RNA polymerase II transcription subunit 21</fullName>
    </recommendedName>
    <alternativeName>
        <fullName>Mediator complex subunit 21</fullName>
    </alternativeName>
    <alternativeName>
        <fullName>RNA polymerase II holoenzyme component SRB7</fullName>
        <shortName>RNAPII complex component SRB7</shortName>
    </alternativeName>
</protein>
<organism>
    <name type="scientific">Macaca fascicularis</name>
    <name type="common">Crab-eating macaque</name>
    <name type="synonym">Cynomolgus monkey</name>
    <dbReference type="NCBI Taxonomy" id="9541"/>
    <lineage>
        <taxon>Eukaryota</taxon>
        <taxon>Metazoa</taxon>
        <taxon>Chordata</taxon>
        <taxon>Craniata</taxon>
        <taxon>Vertebrata</taxon>
        <taxon>Euteleostomi</taxon>
        <taxon>Mammalia</taxon>
        <taxon>Eutheria</taxon>
        <taxon>Euarchontoglires</taxon>
        <taxon>Primates</taxon>
        <taxon>Haplorrhini</taxon>
        <taxon>Catarrhini</taxon>
        <taxon>Cercopithecidae</taxon>
        <taxon>Cercopithecinae</taxon>
        <taxon>Macaca</taxon>
    </lineage>
</organism>
<gene>
    <name type="primary">MED21</name>
    <name type="synonym">SURB7</name>
    <name type="ORF">QtsA-17555</name>
</gene>
<sequence length="144" mass="15523">MADRLTQLQDAVNSLADQFCNAIGVLQQCGPPASFSNIQTAINKDQPANPTEEYAQLFAALIARTAKDIDVLIDSLPSEESTAALQAASLYKLEEENHEAATCLEDVVYRGDMLLEKIQSALADIAQSQLKTRSGSHSQSLPDS</sequence>